<gene>
    <name type="primary">cagS</name>
    <name type="synonym">cag13</name>
    <name type="ordered locus">jhp_0482</name>
</gene>
<feature type="chain" id="PRO_0000089282" description="CAG pathogenicity island protein 13">
    <location>
        <begin position="1"/>
        <end position="199"/>
    </location>
</feature>
<accession>Q9ZLU4</accession>
<dbReference type="EMBL" id="AE001439">
    <property type="protein sequence ID" value="AAD06070.1"/>
    <property type="molecule type" value="Genomic_DNA"/>
</dbReference>
<dbReference type="PIR" id="D71925">
    <property type="entry name" value="D71925"/>
</dbReference>
<dbReference type="RefSeq" id="WP_000069613.1">
    <property type="nucleotide sequence ID" value="NC_000921.1"/>
</dbReference>
<dbReference type="SMR" id="Q9ZLU4"/>
<dbReference type="KEGG" id="hpj:jhp_0482"/>
<dbReference type="PATRIC" id="fig|85963.30.peg.518"/>
<dbReference type="Proteomes" id="UP000000804">
    <property type="component" value="Chromosome"/>
</dbReference>
<dbReference type="Gene3D" id="1.20.120.1140">
    <property type="entry name" value="CAG pathogenicity island protein 13, CagS"/>
    <property type="match status" value="1"/>
</dbReference>
<dbReference type="InterPro" id="IPR032020">
    <property type="entry name" value="CagS"/>
</dbReference>
<dbReference type="InterPro" id="IPR038306">
    <property type="entry name" value="CagS_sf"/>
</dbReference>
<dbReference type="Pfam" id="PF16707">
    <property type="entry name" value="CagS"/>
    <property type="match status" value="1"/>
</dbReference>
<sequence length="199" mass="23671">MSNNMRKLFSMIANSKDKKEKLIESLQENELLNTDEKKKIIDQIKTMHDFFKQMHTNKGALDKVLRNYMKDYRAVIKSIGVDKFKKVYRLLESETMELLHAIAENPNFLFSKFDRSILGIFLPFFSKPIMFKMSIREMDSQIELYGTKLPPLKLFVMTDEEVNFYANLKTIEQYNDYVRDLLMKFDLEKYMEEKGVQNA</sequence>
<reference key="1">
    <citation type="journal article" date="1999" name="Nature">
        <title>Genomic sequence comparison of two unrelated isolates of the human gastric pathogen Helicobacter pylori.</title>
        <authorList>
            <person name="Alm R.A."/>
            <person name="Ling L.-S.L."/>
            <person name="Moir D.T."/>
            <person name="King B.L."/>
            <person name="Brown E.D."/>
            <person name="Doig P.C."/>
            <person name="Smith D.R."/>
            <person name="Noonan B."/>
            <person name="Guild B.C."/>
            <person name="deJonge B.L."/>
            <person name="Carmel G."/>
            <person name="Tummino P.J."/>
            <person name="Caruso A."/>
            <person name="Uria-Nickelsen M."/>
            <person name="Mills D.M."/>
            <person name="Ives C."/>
            <person name="Gibson R."/>
            <person name="Merberg D."/>
            <person name="Mills S.D."/>
            <person name="Jiang Q."/>
            <person name="Taylor D.E."/>
            <person name="Vovis G.F."/>
            <person name="Trust T.J."/>
        </authorList>
    </citation>
    <scope>NUCLEOTIDE SEQUENCE [LARGE SCALE GENOMIC DNA]</scope>
    <source>
        <strain>J99 / ATCC 700824</strain>
    </source>
</reference>
<protein>
    <recommendedName>
        <fullName>CAG pathogenicity island protein 13</fullName>
    </recommendedName>
</protein>
<proteinExistence type="predicted"/>
<name>CAGS_HELPJ</name>
<organism>
    <name type="scientific">Helicobacter pylori (strain J99 / ATCC 700824)</name>
    <name type="common">Campylobacter pylori J99</name>
    <dbReference type="NCBI Taxonomy" id="85963"/>
    <lineage>
        <taxon>Bacteria</taxon>
        <taxon>Pseudomonadati</taxon>
        <taxon>Campylobacterota</taxon>
        <taxon>Epsilonproteobacteria</taxon>
        <taxon>Campylobacterales</taxon>
        <taxon>Helicobacteraceae</taxon>
        <taxon>Helicobacter</taxon>
    </lineage>
</organism>